<name>ADPRH_MOUSE</name>
<gene>
    <name type="primary">Adprh</name>
    <name type="synonym">Arh1</name>
</gene>
<feature type="chain" id="PRO_0000157284" description="ADP-ribosylhydrolase ARH1">
    <location>
        <begin position="1"/>
        <end position="362"/>
    </location>
</feature>
<feature type="region of interest" description="Substrate" evidence="1">
    <location>
        <begin position="106"/>
        <end position="108"/>
    </location>
</feature>
<feature type="region of interest" description="Substrate" evidence="1">
    <location>
        <begin position="168"/>
        <end position="170"/>
    </location>
</feature>
<feature type="region of interest" description="Substrate" evidence="1">
    <location>
        <begin position="268"/>
        <end position="270"/>
    </location>
</feature>
<feature type="region of interest" description="Substrate" evidence="1">
    <location>
        <begin position="274"/>
        <end position="275"/>
    </location>
</feature>
<feature type="binding site" evidence="1">
    <location>
        <position position="59"/>
    </location>
    <ligand>
        <name>Mg(2+)</name>
        <dbReference type="ChEBI" id="CHEBI:18420"/>
        <label>1</label>
    </ligand>
</feature>
<feature type="binding site" evidence="1">
    <location>
        <position position="60"/>
    </location>
    <ligand>
        <name>Mg(2+)</name>
        <dbReference type="ChEBI" id="CHEBI:18420"/>
        <label>1</label>
    </ligand>
</feature>
<feature type="binding site" evidence="1">
    <location>
        <position position="61"/>
    </location>
    <ligand>
        <name>Mg(2+)</name>
        <dbReference type="ChEBI" id="CHEBI:18420"/>
        <label>1</label>
    </ligand>
</feature>
<feature type="binding site" evidence="1">
    <location>
        <position position="90"/>
    </location>
    <ligand>
        <name>substrate</name>
    </ligand>
</feature>
<feature type="binding site" evidence="1">
    <location>
        <position position="129"/>
    </location>
    <ligand>
        <name>substrate</name>
    </ligand>
</feature>
<feature type="binding site" evidence="1">
    <location>
        <position position="135"/>
    </location>
    <ligand>
        <name>substrate</name>
    </ligand>
</feature>
<feature type="binding site" evidence="1">
    <location>
        <position position="307"/>
    </location>
    <ligand>
        <name>Mg(2+)</name>
        <dbReference type="ChEBI" id="CHEBI:18420"/>
        <label>2</label>
    </ligand>
</feature>
<feature type="binding site" evidence="1">
    <location>
        <position position="309"/>
    </location>
    <ligand>
        <name>Mg(2+)</name>
        <dbReference type="ChEBI" id="CHEBI:18420"/>
        <label>1</label>
    </ligand>
</feature>
<feature type="binding site" evidence="1">
    <location>
        <position position="309"/>
    </location>
    <ligand>
        <name>Mg(2+)</name>
        <dbReference type="ChEBI" id="CHEBI:18420"/>
        <label>2</label>
    </ligand>
</feature>
<feature type="binding site" evidence="1">
    <location>
        <position position="310"/>
    </location>
    <ligand>
        <name>Mg(2+)</name>
        <dbReference type="ChEBI" id="CHEBI:18420"/>
        <label>2</label>
    </ligand>
</feature>
<proteinExistence type="evidence at protein level"/>
<comment type="function">
    <text evidence="2">Specifically acts as an arginine mono-ADP-ribosylhydrolase by mediating the removal of mono-ADP-ribose attached to arginine residues on proteins.</text>
</comment>
<comment type="catalytic activity">
    <reaction evidence="1">
        <text>N(omega)-(ADP-D-ribosyl)-L-arginyl-[protein] + H2O = ADP-D-ribose + L-arginyl-[protein]</text>
        <dbReference type="Rhea" id="RHEA:14885"/>
        <dbReference type="Rhea" id="RHEA-COMP:10532"/>
        <dbReference type="Rhea" id="RHEA-COMP:15087"/>
        <dbReference type="ChEBI" id="CHEBI:15377"/>
        <dbReference type="ChEBI" id="CHEBI:29965"/>
        <dbReference type="ChEBI" id="CHEBI:57967"/>
        <dbReference type="ChEBI" id="CHEBI:142554"/>
        <dbReference type="EC" id="3.2.2.19"/>
    </reaction>
</comment>
<comment type="catalytic activity">
    <reaction evidence="1">
        <text>alpha-NAD(+) + H2O = ADP-D-ribose + nicotinamide + H(+)</text>
        <dbReference type="Rhea" id="RHEA:68792"/>
        <dbReference type="ChEBI" id="CHEBI:15377"/>
        <dbReference type="ChEBI" id="CHEBI:15378"/>
        <dbReference type="ChEBI" id="CHEBI:17154"/>
        <dbReference type="ChEBI" id="CHEBI:57967"/>
        <dbReference type="ChEBI" id="CHEBI:77017"/>
    </reaction>
</comment>
<comment type="cofactor">
    <cofactor evidence="1">
        <name>Mg(2+)</name>
        <dbReference type="ChEBI" id="CHEBI:18420"/>
    </cofactor>
    <text evidence="1">Binds 2 magnesium ions per subunit.</text>
</comment>
<comment type="activity regulation">
    <text evidence="2">Synergistically stimulated by magnesium and dithiothreitol (DTT) in vitro.</text>
</comment>
<comment type="subunit">
    <text evidence="1">Monomer.</text>
</comment>
<comment type="similarity">
    <text evidence="3">Belongs to the ADP-ribosylglycohydrolase family.</text>
</comment>
<organism>
    <name type="scientific">Mus musculus</name>
    <name type="common">Mouse</name>
    <dbReference type="NCBI Taxonomy" id="10090"/>
    <lineage>
        <taxon>Eukaryota</taxon>
        <taxon>Metazoa</taxon>
        <taxon>Chordata</taxon>
        <taxon>Craniata</taxon>
        <taxon>Vertebrata</taxon>
        <taxon>Euteleostomi</taxon>
        <taxon>Mammalia</taxon>
        <taxon>Eutheria</taxon>
        <taxon>Euarchontoglires</taxon>
        <taxon>Glires</taxon>
        <taxon>Rodentia</taxon>
        <taxon>Myomorpha</taxon>
        <taxon>Muroidea</taxon>
        <taxon>Muridae</taxon>
        <taxon>Murinae</taxon>
        <taxon>Mus</taxon>
        <taxon>Mus</taxon>
    </lineage>
</organism>
<reference key="1">
    <citation type="journal article" date="1993" name="J. Biol. Chem.">
        <title>Cloning and site-directed mutagenesis of human ADP-ribosylarginine hydrolase.</title>
        <authorList>
            <person name="Takada T."/>
            <person name="Iida K."/>
            <person name="Moss J."/>
        </authorList>
    </citation>
    <scope>NUCLEOTIDE SEQUENCE [MRNA]</scope>
    <scope>FUNCTION</scope>
</reference>
<reference key="2">
    <citation type="journal article" date="2005" name="Gene">
        <title>Genomic organization and promoter analysis of the mouse ADP-ribosylarginine hydrolase gene.</title>
        <authorList>
            <person name="Aoki K."/>
            <person name="Kato J."/>
            <person name="Shoemaker M.T."/>
            <person name="Moss J."/>
        </authorList>
    </citation>
    <scope>NUCLEOTIDE SEQUENCE [MRNA]</scope>
</reference>
<reference key="3">
    <citation type="journal article" date="2004" name="Genome Res.">
        <title>The status, quality, and expansion of the NIH full-length cDNA project: the Mammalian Gene Collection (MGC).</title>
        <authorList>
            <consortium name="The MGC Project Team"/>
        </authorList>
    </citation>
    <scope>NUCLEOTIDE SEQUENCE [LARGE SCALE MRNA]</scope>
</reference>
<reference key="4">
    <citation type="journal article" date="2010" name="Cell">
        <title>A tissue-specific atlas of mouse protein phosphorylation and expression.</title>
        <authorList>
            <person name="Huttlin E.L."/>
            <person name="Jedrychowski M.P."/>
            <person name="Elias J.E."/>
            <person name="Goswami T."/>
            <person name="Rad R."/>
            <person name="Beausoleil S.A."/>
            <person name="Villen J."/>
            <person name="Haas W."/>
            <person name="Sowa M.E."/>
            <person name="Gygi S.P."/>
        </authorList>
    </citation>
    <scope>IDENTIFICATION BY MASS SPECTROMETRY [LARGE SCALE ANALYSIS]</scope>
    <source>
        <tissue>Brain</tissue>
        <tissue>Heart</tissue>
        <tissue>Kidney</tissue>
        <tissue>Lung</tissue>
        <tissue>Spleen</tissue>
        <tissue>Testis</tissue>
    </source>
</reference>
<evidence type="ECO:0000250" key="1">
    <source>
        <dbReference type="UniProtKB" id="P54922"/>
    </source>
</evidence>
<evidence type="ECO:0000269" key="2">
    <source>
    </source>
</evidence>
<evidence type="ECO:0000305" key="3"/>
<keyword id="KW-0378">Hydrolase</keyword>
<keyword id="KW-0460">Magnesium</keyword>
<keyword id="KW-0479">Metal-binding</keyword>
<keyword id="KW-1185">Reference proteome</keyword>
<protein>
    <recommendedName>
        <fullName evidence="3">ADP-ribosylhydrolase ARH1</fullName>
        <ecNumber evidence="1">3.2.2.19</ecNumber>
    </recommendedName>
    <alternativeName>
        <fullName>ADP-ribose-L-arginine cleaving enzyme</fullName>
    </alternativeName>
    <alternativeName>
        <fullName>[Protein ADP-ribosylarginine] hydrolase</fullName>
        <shortName>ADP-ribosylarginine hydrolase</shortName>
    </alternativeName>
</protein>
<dbReference type="EC" id="3.2.2.19" evidence="1"/>
<dbReference type="EMBL" id="L13290">
    <property type="protein sequence ID" value="AAA37259.1"/>
    <property type="molecule type" value="mRNA"/>
</dbReference>
<dbReference type="EMBL" id="AF244347">
    <property type="protein sequence ID" value="AAF86223.1"/>
    <property type="molecule type" value="mRNA"/>
</dbReference>
<dbReference type="EMBL" id="BC003437">
    <property type="protein sequence ID" value="AAH03437.1"/>
    <property type="molecule type" value="mRNA"/>
</dbReference>
<dbReference type="CCDS" id="CCDS28167.1"/>
<dbReference type="PIR" id="A47411">
    <property type="entry name" value="A47411"/>
</dbReference>
<dbReference type="RefSeq" id="NP_031440.1">
    <property type="nucleotide sequence ID" value="NM_007414.3"/>
</dbReference>
<dbReference type="SMR" id="P54923"/>
<dbReference type="BioGRID" id="197997">
    <property type="interactions" value="1"/>
</dbReference>
<dbReference type="FunCoup" id="P54923">
    <property type="interactions" value="101"/>
</dbReference>
<dbReference type="IntAct" id="P54923">
    <property type="interactions" value="1"/>
</dbReference>
<dbReference type="MINT" id="P54923"/>
<dbReference type="STRING" id="10090.ENSMUSP00000002923"/>
<dbReference type="iPTMnet" id="P54923"/>
<dbReference type="PhosphoSitePlus" id="P54923"/>
<dbReference type="SwissPalm" id="P54923"/>
<dbReference type="REPRODUCTION-2DPAGE" id="P54923"/>
<dbReference type="jPOST" id="P54923"/>
<dbReference type="PaxDb" id="10090-ENSMUSP00000002923"/>
<dbReference type="PeptideAtlas" id="P54923"/>
<dbReference type="ProteomicsDB" id="281941"/>
<dbReference type="Pumba" id="P54923"/>
<dbReference type="Antibodypedia" id="32747">
    <property type="antibodies" value="136 antibodies from 22 providers"/>
</dbReference>
<dbReference type="DNASU" id="11544"/>
<dbReference type="Ensembl" id="ENSMUST00000002923.10">
    <property type="protein sequence ID" value="ENSMUSP00000002923.9"/>
    <property type="gene ID" value="ENSMUSG00000002844.10"/>
</dbReference>
<dbReference type="GeneID" id="11544"/>
<dbReference type="KEGG" id="mmu:11544"/>
<dbReference type="UCSC" id="uc007zex.1">
    <property type="organism name" value="mouse"/>
</dbReference>
<dbReference type="AGR" id="MGI:1098234"/>
<dbReference type="CTD" id="141"/>
<dbReference type="MGI" id="MGI:1098234">
    <property type="gene designation" value="Adprh"/>
</dbReference>
<dbReference type="VEuPathDB" id="HostDB:ENSMUSG00000002844"/>
<dbReference type="eggNOG" id="ENOG502QPMI">
    <property type="taxonomic scope" value="Eukaryota"/>
</dbReference>
<dbReference type="GeneTree" id="ENSGT00530000063627"/>
<dbReference type="HOGENOM" id="CLU_047061_0_0_1"/>
<dbReference type="InParanoid" id="P54923"/>
<dbReference type="OMA" id="RKWEFLQ"/>
<dbReference type="OrthoDB" id="10250509at2759"/>
<dbReference type="PhylomeDB" id="P54923"/>
<dbReference type="TreeFam" id="TF329417"/>
<dbReference type="BioGRID-ORCS" id="11544">
    <property type="hits" value="1 hit in 76 CRISPR screens"/>
</dbReference>
<dbReference type="ChiTaRS" id="Adprh">
    <property type="organism name" value="mouse"/>
</dbReference>
<dbReference type="PRO" id="PR:P54923"/>
<dbReference type="Proteomes" id="UP000000589">
    <property type="component" value="Chromosome 16"/>
</dbReference>
<dbReference type="RNAct" id="P54923">
    <property type="molecule type" value="protein"/>
</dbReference>
<dbReference type="Bgee" id="ENSMUSG00000002844">
    <property type="expression patterns" value="Expressed in frontonasal prominence and 255 other cell types or tissues"/>
</dbReference>
<dbReference type="ExpressionAtlas" id="P54923">
    <property type="expression patterns" value="baseline and differential"/>
</dbReference>
<dbReference type="GO" id="GO:0005615">
    <property type="term" value="C:extracellular space"/>
    <property type="evidence" value="ECO:0007669"/>
    <property type="project" value="Ensembl"/>
</dbReference>
<dbReference type="GO" id="GO:0003875">
    <property type="term" value="F:ADP-ribosylarginine hydrolase activity"/>
    <property type="evidence" value="ECO:0000315"/>
    <property type="project" value="UniProtKB"/>
</dbReference>
<dbReference type="GO" id="GO:0000287">
    <property type="term" value="F:magnesium ion binding"/>
    <property type="evidence" value="ECO:0000250"/>
    <property type="project" value="UniProtKB"/>
</dbReference>
<dbReference type="GO" id="GO:0030955">
    <property type="term" value="F:potassium ion binding"/>
    <property type="evidence" value="ECO:0000250"/>
    <property type="project" value="UniProtKB"/>
</dbReference>
<dbReference type="GO" id="GO:0051725">
    <property type="term" value="P:protein de-ADP-ribosylation"/>
    <property type="evidence" value="ECO:0000250"/>
    <property type="project" value="UniProtKB"/>
</dbReference>
<dbReference type="GO" id="GO:0036211">
    <property type="term" value="P:protein modification process"/>
    <property type="evidence" value="ECO:0000315"/>
    <property type="project" value="UniProtKB"/>
</dbReference>
<dbReference type="FunFam" id="1.10.4080.10:FF:000002">
    <property type="entry name" value="ADP-ribosylarginine hydrolase isoform X1"/>
    <property type="match status" value="1"/>
</dbReference>
<dbReference type="Gene3D" id="1.10.4080.10">
    <property type="entry name" value="ADP-ribosylation/Crystallin J1"/>
    <property type="match status" value="1"/>
</dbReference>
<dbReference type="InterPro" id="IPR012108">
    <property type="entry name" value="ADP-ribosylarg_hydro"/>
</dbReference>
<dbReference type="InterPro" id="IPR050792">
    <property type="entry name" value="ADP-ribosylglycohydrolase"/>
</dbReference>
<dbReference type="InterPro" id="IPR005502">
    <property type="entry name" value="Ribosyl_crysJ1"/>
</dbReference>
<dbReference type="InterPro" id="IPR036705">
    <property type="entry name" value="Ribosyl_crysJ1_sf"/>
</dbReference>
<dbReference type="PANTHER" id="PTHR16222">
    <property type="entry name" value="ADP-RIBOSYLGLYCOHYDROLASE"/>
    <property type="match status" value="1"/>
</dbReference>
<dbReference type="PANTHER" id="PTHR16222:SF26">
    <property type="entry name" value="ADP-RIBOSYLHYDROLASE ARH1"/>
    <property type="match status" value="1"/>
</dbReference>
<dbReference type="Pfam" id="PF03747">
    <property type="entry name" value="ADP_ribosyl_GH"/>
    <property type="match status" value="1"/>
</dbReference>
<dbReference type="PIRSF" id="PIRSF016939">
    <property type="entry name" value="ADP_ribslarg_hdr"/>
    <property type="match status" value="1"/>
</dbReference>
<dbReference type="SUPFAM" id="SSF101478">
    <property type="entry name" value="ADP-ribosylglycohydrolase"/>
    <property type="match status" value="1"/>
</dbReference>
<accession>P54923</accession>
<sequence>MGGGLIERYVAAMVLSAAGDTLGYFNGKWEFIRDGETIHQQLAQMGDLEAIDVARWRVSDDTVMHLATAEALMEAGQSPDLPRLYSLLAKHYRDCMGDMDGRAPGGACMQNAMLLQPNRADGYRIPFNSHEGGCGAAMRAMCIGLRFPHPSQLDLLIQVSIESGRMTHHHPTGYLGSLASALFTAYAVNGKSPWQWGKGLMEVLPEAKKYITQSGYFVKENLQHWSYFEKEWEKYLELRGILDGNSAPVFPQPFGVKERDQFYIDVSYSGWGGSSGHDAPMIAYDALLAAGDSWKELAHRAFFHGGDSDSTAAIAGCWWGVMYGFKGVNPANYEKLEYRQRLEEAGRALYSLGSKEDPVLDP</sequence>